<sequence length="87" mass="9545">MNSLLMITTCLVLFGTVWAKEGYLVSKSTGCKYECFWLGKNEGCDKECKAPNQGGGYGYCHAFACWCENLPESTPTYPIPGKSCGKK</sequence>
<comment type="function">
    <text evidence="1">Beta toxins bind voltage-independently at site-4 of sodium channels (Nav) and shift the voltage of activation toward more negative potentials thereby affecting sodium channel activation and promoting spontaneous and repetitive firing.</text>
</comment>
<comment type="subcellular location">
    <subcellularLocation>
        <location>Secreted</location>
    </subcellularLocation>
</comment>
<comment type="tissue specificity">
    <text>Expressed by the venom gland.</text>
</comment>
<comment type="domain">
    <text evidence="4">Has the structural arrangement of an alpha-helix connected to antiparallel beta-sheets by disulfide bonds (CS-alpha/beta).</text>
</comment>
<comment type="similarity">
    <text evidence="4">Belongs to the long (4 C-C) scorpion toxin superfamily. Sodium channel inhibitor family. Beta subfamily.</text>
</comment>
<organism>
    <name type="scientific">Centruroides exilicauda</name>
    <name type="common">Bark scorpion</name>
    <name type="synonym">Buthus exilicauda</name>
    <dbReference type="NCBI Taxonomy" id="6879"/>
    <lineage>
        <taxon>Eukaryota</taxon>
        <taxon>Metazoa</taxon>
        <taxon>Ecdysozoa</taxon>
        <taxon>Arthropoda</taxon>
        <taxon>Chelicerata</taxon>
        <taxon>Arachnida</taxon>
        <taxon>Scorpiones</taxon>
        <taxon>Buthida</taxon>
        <taxon>Buthoidea</taxon>
        <taxon>Buthidae</taxon>
        <taxon>Centruroides</taxon>
    </lineage>
</organism>
<feature type="signal peptide" evidence="2">
    <location>
        <begin position="1"/>
        <end position="19"/>
    </location>
</feature>
<feature type="chain" id="PRO_0000254062" description="Neurotoxin Cex1">
    <location>
        <begin position="20"/>
        <end position="84"/>
    </location>
</feature>
<feature type="propeptide" id="PRO_0000254063">
    <location>
        <begin position="85"/>
        <end position="87"/>
    </location>
</feature>
<feature type="domain" description="LCN-type CS-alpha/beta" evidence="3">
    <location>
        <begin position="20"/>
        <end position="85"/>
    </location>
</feature>
<feature type="modified residue" description="Cysteine amide" evidence="2">
    <location>
        <position position="84"/>
    </location>
</feature>
<feature type="disulfide bond" evidence="3">
    <location>
        <begin position="31"/>
        <end position="84"/>
    </location>
</feature>
<feature type="disulfide bond" evidence="3">
    <location>
        <begin position="35"/>
        <end position="60"/>
    </location>
</feature>
<feature type="disulfide bond" evidence="3">
    <location>
        <begin position="44"/>
        <end position="65"/>
    </location>
</feature>
<feature type="disulfide bond" evidence="3">
    <location>
        <begin position="48"/>
        <end position="67"/>
    </location>
</feature>
<protein>
    <recommendedName>
        <fullName>Neurotoxin Cex1</fullName>
    </recommendedName>
</protein>
<name>SCX1_CENEX</name>
<reference key="1">
    <citation type="journal article" date="2004" name="Biochimie">
        <title>Biochemical, genetic and physiological characterization of venom components from two species of scorpions: Centruroides exilicauda Wood and Centruroides sculpturatus Ewing.</title>
        <authorList>
            <person name="Valdez-Cruz N.A."/>
            <person name="Davila S."/>
            <person name="Licea A."/>
            <person name="Corona M."/>
            <person name="Zamudio F.Z."/>
            <person name="Garcia-Valdes J."/>
            <person name="Boyer L."/>
            <person name="Possani L.D."/>
        </authorList>
    </citation>
    <scope>NUCLEOTIDE SEQUENCE [MRNA]</scope>
    <scope>PROTEIN SEQUENCE OF 20-45</scope>
    <source>
        <tissue>Venom</tissue>
        <tissue>Venom gland</tissue>
    </source>
</reference>
<keyword id="KW-0027">Amidation</keyword>
<keyword id="KW-0903">Direct protein sequencing</keyword>
<keyword id="KW-1015">Disulfide bond</keyword>
<keyword id="KW-0872">Ion channel impairing toxin</keyword>
<keyword id="KW-0528">Neurotoxin</keyword>
<keyword id="KW-0964">Secreted</keyword>
<keyword id="KW-0732">Signal</keyword>
<keyword id="KW-0800">Toxin</keyword>
<keyword id="KW-0738">Voltage-gated sodium channel impairing toxin</keyword>
<evidence type="ECO:0000250" key="1"/>
<evidence type="ECO:0000255" key="2"/>
<evidence type="ECO:0000255" key="3">
    <source>
        <dbReference type="PROSITE-ProRule" id="PRU01210"/>
    </source>
</evidence>
<evidence type="ECO:0000305" key="4"/>
<proteinExistence type="evidence at protein level"/>
<accession>Q68PH4</accession>
<dbReference type="EMBL" id="AY649859">
    <property type="protein sequence ID" value="AAT97992.1"/>
    <property type="molecule type" value="mRNA"/>
</dbReference>
<dbReference type="SMR" id="Q68PH4"/>
<dbReference type="GO" id="GO:0005576">
    <property type="term" value="C:extracellular region"/>
    <property type="evidence" value="ECO:0007669"/>
    <property type="project" value="UniProtKB-SubCell"/>
</dbReference>
<dbReference type="GO" id="GO:0019871">
    <property type="term" value="F:sodium channel inhibitor activity"/>
    <property type="evidence" value="ECO:0007669"/>
    <property type="project" value="InterPro"/>
</dbReference>
<dbReference type="GO" id="GO:0090729">
    <property type="term" value="F:toxin activity"/>
    <property type="evidence" value="ECO:0007669"/>
    <property type="project" value="UniProtKB-KW"/>
</dbReference>
<dbReference type="GO" id="GO:0006952">
    <property type="term" value="P:defense response"/>
    <property type="evidence" value="ECO:0007669"/>
    <property type="project" value="InterPro"/>
</dbReference>
<dbReference type="CDD" id="cd23106">
    <property type="entry name" value="neurotoxins_LC_scorpion"/>
    <property type="match status" value="1"/>
</dbReference>
<dbReference type="FunFam" id="3.30.30.10:FF:000002">
    <property type="entry name" value="Alpha-like toxin BmK-M1"/>
    <property type="match status" value="1"/>
</dbReference>
<dbReference type="Gene3D" id="3.30.30.10">
    <property type="entry name" value="Knottin, scorpion toxin-like"/>
    <property type="match status" value="1"/>
</dbReference>
<dbReference type="InterPro" id="IPR044062">
    <property type="entry name" value="LCN-type_CS_alpha_beta_dom"/>
</dbReference>
<dbReference type="InterPro" id="IPR003614">
    <property type="entry name" value="Scorpion_toxin-like"/>
</dbReference>
<dbReference type="InterPro" id="IPR036574">
    <property type="entry name" value="Scorpion_toxin-like_sf"/>
</dbReference>
<dbReference type="InterPro" id="IPR018218">
    <property type="entry name" value="Scorpion_toxinL"/>
</dbReference>
<dbReference type="InterPro" id="IPR002061">
    <property type="entry name" value="Scorpion_toxinL/defensin"/>
</dbReference>
<dbReference type="Pfam" id="PF00537">
    <property type="entry name" value="Toxin_3"/>
    <property type="match status" value="1"/>
</dbReference>
<dbReference type="PRINTS" id="PR00285">
    <property type="entry name" value="SCORPNTOXIN"/>
</dbReference>
<dbReference type="SMART" id="SM00505">
    <property type="entry name" value="Knot1"/>
    <property type="match status" value="1"/>
</dbReference>
<dbReference type="SUPFAM" id="SSF57095">
    <property type="entry name" value="Scorpion toxin-like"/>
    <property type="match status" value="1"/>
</dbReference>
<dbReference type="PROSITE" id="PS51863">
    <property type="entry name" value="LCN_CSAB"/>
    <property type="match status" value="1"/>
</dbReference>